<gene>
    <name evidence="1" type="primary">tmaR</name>
    <name type="ordered locus">Asuc_0921</name>
</gene>
<organism>
    <name type="scientific">Actinobacillus succinogenes (strain ATCC 55618 / DSM 22257 / CCUG 43843 / 130Z)</name>
    <dbReference type="NCBI Taxonomy" id="339671"/>
    <lineage>
        <taxon>Bacteria</taxon>
        <taxon>Pseudomonadati</taxon>
        <taxon>Pseudomonadota</taxon>
        <taxon>Gammaproteobacteria</taxon>
        <taxon>Pasteurellales</taxon>
        <taxon>Pasteurellaceae</taxon>
        <taxon>Actinobacillus</taxon>
    </lineage>
</organism>
<evidence type="ECO:0000255" key="1">
    <source>
        <dbReference type="HAMAP-Rule" id="MF_00683"/>
    </source>
</evidence>
<accession>A6VMU2</accession>
<name>TMAR_ACTSZ</name>
<sequence length="114" mass="13634">MENVNKQSFQEVLEYVRINRQRNKLLREIGDCERKIRDNKKRVLLLDNLTDYIQDNMTIEDIRAIINNMHDDYENRVDDYVIKAAELSKQRRDLKTRMKELKASHAALAKKGKE</sequence>
<reference key="1">
    <citation type="journal article" date="2010" name="BMC Genomics">
        <title>A genomic perspective on the potential of Actinobacillus succinogenes for industrial succinate production.</title>
        <authorList>
            <person name="McKinlay J.B."/>
            <person name="Laivenieks M."/>
            <person name="Schindler B.D."/>
            <person name="McKinlay A.A."/>
            <person name="Siddaramappa S."/>
            <person name="Challacombe J.F."/>
            <person name="Lowry S.R."/>
            <person name="Clum A."/>
            <person name="Lapidus A.L."/>
            <person name="Burkhart K.B."/>
            <person name="Harkins V."/>
            <person name="Vieille C."/>
        </authorList>
    </citation>
    <scope>NUCLEOTIDE SEQUENCE [LARGE SCALE GENOMIC DNA]</scope>
    <source>
        <strain>ATCC 55618 / DSM 22257 / CCUG 43843 / 130Z</strain>
    </source>
</reference>
<proteinExistence type="inferred from homology"/>
<protein>
    <recommendedName>
        <fullName evidence="1">Pole-localizer protein TmaR</fullName>
    </recommendedName>
</protein>
<feature type="chain" id="PRO_1000147736" description="Pole-localizer protein TmaR">
    <location>
        <begin position="1"/>
        <end position="114"/>
    </location>
</feature>
<feature type="coiled-coil region" evidence="1">
    <location>
        <begin position="70"/>
        <end position="111"/>
    </location>
</feature>
<keyword id="KW-0175">Coiled coil</keyword>
<keyword id="KW-0963">Cytoplasm</keyword>
<keyword id="KW-1185">Reference proteome</keyword>
<comment type="function">
    <text evidence="1">Pole-localizer protein involved in the regulation of several cellular processes.</text>
</comment>
<comment type="subcellular location">
    <subcellularLocation>
        <location evidence="1">Cytoplasm</location>
    </subcellularLocation>
</comment>
<comment type="similarity">
    <text evidence="1">Belongs to the pole-localizer TmaR family.</text>
</comment>
<dbReference type="EMBL" id="CP000746">
    <property type="protein sequence ID" value="ABR74289.1"/>
    <property type="molecule type" value="Genomic_DNA"/>
</dbReference>
<dbReference type="RefSeq" id="WP_012072666.1">
    <property type="nucleotide sequence ID" value="NC_009655.1"/>
</dbReference>
<dbReference type="SMR" id="A6VMU2"/>
<dbReference type="STRING" id="339671.Asuc_0921"/>
<dbReference type="KEGG" id="asu:Asuc_0921"/>
<dbReference type="eggNOG" id="COG2926">
    <property type="taxonomic scope" value="Bacteria"/>
</dbReference>
<dbReference type="HOGENOM" id="CLU_153146_0_0_6"/>
<dbReference type="OrthoDB" id="90485at2"/>
<dbReference type="Proteomes" id="UP000001114">
    <property type="component" value="Chromosome"/>
</dbReference>
<dbReference type="GO" id="GO:0005829">
    <property type="term" value="C:cytosol"/>
    <property type="evidence" value="ECO:0007669"/>
    <property type="project" value="TreeGrafter"/>
</dbReference>
<dbReference type="HAMAP" id="MF_00683">
    <property type="entry name" value="Pole_loc_TmaR"/>
    <property type="match status" value="1"/>
</dbReference>
<dbReference type="InterPro" id="IPR007458">
    <property type="entry name" value="DUF496"/>
</dbReference>
<dbReference type="NCBIfam" id="NF003844">
    <property type="entry name" value="PRK05423.1"/>
    <property type="match status" value="1"/>
</dbReference>
<dbReference type="PANTHER" id="PTHR39591">
    <property type="entry name" value="UPF0265 PROTEIN YEEX"/>
    <property type="match status" value="1"/>
</dbReference>
<dbReference type="PANTHER" id="PTHR39591:SF1">
    <property type="entry name" value="UPF0265 PROTEIN YEEX"/>
    <property type="match status" value="1"/>
</dbReference>
<dbReference type="Pfam" id="PF04363">
    <property type="entry name" value="DUF496"/>
    <property type="match status" value="1"/>
</dbReference>
<dbReference type="PIRSF" id="PIRSF028773">
    <property type="entry name" value="UCP028773"/>
    <property type="match status" value="1"/>
</dbReference>